<comment type="function">
    <text evidence="1">One of the primary rRNA binding proteins, it binds directly to 16S rRNA where it nucleates assembly of the head domain of the 30S subunit.</text>
</comment>
<comment type="subunit">
    <text>Part of the 30S ribosomal subunit.</text>
</comment>
<comment type="subcellular location">
    <subcellularLocation>
        <location>Plastid</location>
        <location>Chloroplast</location>
    </subcellularLocation>
</comment>
<comment type="similarity">
    <text evidence="3">Belongs to the universal ribosomal protein uS7 family.</text>
</comment>
<sequence>MSRRGTAEKKTAKSDPIYRNRLVNMLVNRILKHGKKSLAYQIIYRAVKKIQQKTETNPLSVLRQAIRGVTPDITVKARRVGGSTHQVPIEIGSTQGKALAIRWLLAASRKRPGRNMAFKLSSELVDAAKGSGDAIRKKEETHRMAEANRAFAHFR</sequence>
<keyword id="KW-0150">Chloroplast</keyword>
<keyword id="KW-0934">Plastid</keyword>
<keyword id="KW-1185">Reference proteome</keyword>
<keyword id="KW-0687">Ribonucleoprotein</keyword>
<keyword id="KW-0689">Ribosomal protein</keyword>
<keyword id="KW-0694">RNA-binding</keyword>
<keyword id="KW-0699">rRNA-binding</keyword>
<reference key="1">
    <citation type="journal article" date="2006" name="Mol. Genet. Genomics">
        <title>The chloroplast genome of Nicotiana sylvestris and Nicotiana tomentosiformis: complete sequencing confirms that the Nicotiana sylvestris progenitor is the maternal genome donor of Nicotiana tabacum.</title>
        <authorList>
            <person name="Yukawa M."/>
            <person name="Tsudzuki T."/>
            <person name="Sugiura M."/>
        </authorList>
    </citation>
    <scope>NUCLEOTIDE SEQUENCE [LARGE SCALE GENOMIC DNA]</scope>
</reference>
<protein>
    <recommendedName>
        <fullName evidence="2">Small ribosomal subunit protein uS7cz/uS7cy</fullName>
    </recommendedName>
    <alternativeName>
        <fullName>30S ribosomal protein S7, chloroplastic</fullName>
    </alternativeName>
</protein>
<evidence type="ECO:0000250" key="1"/>
<evidence type="ECO:0000255" key="2">
    <source>
        <dbReference type="HAMAP-Rule" id="MF_00480"/>
    </source>
</evidence>
<evidence type="ECO:0000305" key="3"/>
<proteinExistence type="inferred from homology"/>
<feature type="chain" id="PRO_0000277046" description="Small ribosomal subunit protein uS7cz/uS7cy">
    <location>
        <begin position="1"/>
        <end position="155"/>
    </location>
</feature>
<accession>Q3C1M8</accession>
<gene>
    <name type="primary">rps7-A</name>
</gene>
<gene>
    <name type="primary">rps7-B</name>
</gene>
<name>RR7_NICSY</name>
<geneLocation type="chloroplast"/>
<organism>
    <name type="scientific">Nicotiana sylvestris</name>
    <name type="common">Wood tobacco</name>
    <name type="synonym">South American tobacco</name>
    <dbReference type="NCBI Taxonomy" id="4096"/>
    <lineage>
        <taxon>Eukaryota</taxon>
        <taxon>Viridiplantae</taxon>
        <taxon>Streptophyta</taxon>
        <taxon>Embryophyta</taxon>
        <taxon>Tracheophyta</taxon>
        <taxon>Spermatophyta</taxon>
        <taxon>Magnoliopsida</taxon>
        <taxon>eudicotyledons</taxon>
        <taxon>Gunneridae</taxon>
        <taxon>Pentapetalae</taxon>
        <taxon>asterids</taxon>
        <taxon>lamiids</taxon>
        <taxon>Solanales</taxon>
        <taxon>Solanaceae</taxon>
        <taxon>Nicotianoideae</taxon>
        <taxon>Nicotianeae</taxon>
        <taxon>Nicotiana</taxon>
    </lineage>
</organism>
<dbReference type="EMBL" id="AB237912">
    <property type="protein sequence ID" value="BAE46704.1"/>
    <property type="molecule type" value="Genomic_DNA"/>
</dbReference>
<dbReference type="EMBL" id="AB237912">
    <property type="protein sequence ID" value="BAE46727.1"/>
    <property type="molecule type" value="Genomic_DNA"/>
</dbReference>
<dbReference type="SMR" id="Q3C1M8"/>
<dbReference type="KEGG" id="nsy:3735198"/>
<dbReference type="KEGG" id="nsy:3735199"/>
<dbReference type="eggNOG" id="KOG3291">
    <property type="taxonomic scope" value="Eukaryota"/>
</dbReference>
<dbReference type="OrthoDB" id="19957at4085"/>
<dbReference type="Proteomes" id="UP000189701">
    <property type="component" value="Unplaced"/>
</dbReference>
<dbReference type="GO" id="GO:0009507">
    <property type="term" value="C:chloroplast"/>
    <property type="evidence" value="ECO:0007669"/>
    <property type="project" value="UniProtKB-SubCell"/>
</dbReference>
<dbReference type="GO" id="GO:0015935">
    <property type="term" value="C:small ribosomal subunit"/>
    <property type="evidence" value="ECO:0007669"/>
    <property type="project" value="InterPro"/>
</dbReference>
<dbReference type="GO" id="GO:0019843">
    <property type="term" value="F:rRNA binding"/>
    <property type="evidence" value="ECO:0007669"/>
    <property type="project" value="UniProtKB-UniRule"/>
</dbReference>
<dbReference type="GO" id="GO:0003735">
    <property type="term" value="F:structural constituent of ribosome"/>
    <property type="evidence" value="ECO:0007669"/>
    <property type="project" value="InterPro"/>
</dbReference>
<dbReference type="GO" id="GO:0006412">
    <property type="term" value="P:translation"/>
    <property type="evidence" value="ECO:0007669"/>
    <property type="project" value="UniProtKB-UniRule"/>
</dbReference>
<dbReference type="CDD" id="cd14871">
    <property type="entry name" value="uS7_Chloroplast"/>
    <property type="match status" value="1"/>
</dbReference>
<dbReference type="FunFam" id="1.10.455.10:FF:000001">
    <property type="entry name" value="30S ribosomal protein S7"/>
    <property type="match status" value="1"/>
</dbReference>
<dbReference type="Gene3D" id="1.10.455.10">
    <property type="entry name" value="Ribosomal protein S7 domain"/>
    <property type="match status" value="1"/>
</dbReference>
<dbReference type="HAMAP" id="MF_00480_B">
    <property type="entry name" value="Ribosomal_uS7_B"/>
    <property type="match status" value="1"/>
</dbReference>
<dbReference type="InterPro" id="IPR000235">
    <property type="entry name" value="Ribosomal_uS7"/>
</dbReference>
<dbReference type="InterPro" id="IPR005717">
    <property type="entry name" value="Ribosomal_uS7_bac/org-type"/>
</dbReference>
<dbReference type="InterPro" id="IPR020606">
    <property type="entry name" value="Ribosomal_uS7_CS"/>
</dbReference>
<dbReference type="InterPro" id="IPR023798">
    <property type="entry name" value="Ribosomal_uS7_dom"/>
</dbReference>
<dbReference type="InterPro" id="IPR036823">
    <property type="entry name" value="Ribosomal_uS7_dom_sf"/>
</dbReference>
<dbReference type="NCBIfam" id="TIGR01029">
    <property type="entry name" value="rpsG_bact"/>
    <property type="match status" value="1"/>
</dbReference>
<dbReference type="PANTHER" id="PTHR11205">
    <property type="entry name" value="RIBOSOMAL PROTEIN S7"/>
    <property type="match status" value="1"/>
</dbReference>
<dbReference type="Pfam" id="PF00177">
    <property type="entry name" value="Ribosomal_S7"/>
    <property type="match status" value="1"/>
</dbReference>
<dbReference type="PIRSF" id="PIRSF002122">
    <property type="entry name" value="RPS7p_RPS7a_RPS5e_RPS7o"/>
    <property type="match status" value="1"/>
</dbReference>
<dbReference type="SUPFAM" id="SSF47973">
    <property type="entry name" value="Ribosomal protein S7"/>
    <property type="match status" value="1"/>
</dbReference>
<dbReference type="PROSITE" id="PS00052">
    <property type="entry name" value="RIBOSOMAL_S7"/>
    <property type="match status" value="1"/>
</dbReference>